<gene>
    <name type="primary">39</name>
</gene>
<sequence length="139" mass="16002">MITADEQDHEFFDILYQQWAKSTGAEKTYWMPEEVEPPSICETDHGLEDHVIWAVNQETQDKDLVASHLSEADADFICGLHGAIPDLIRRLHEAIDEATSKDEARDRAEANLAEAYLENQGLQERIRELESELSYWSNR</sequence>
<organismHost>
    <name type="scientific">Mycobacterium</name>
    <dbReference type="NCBI Taxonomy" id="1763"/>
</organismHost>
<protein>
    <recommendedName>
        <fullName>Gene 39 protein</fullName>
    </recommendedName>
    <alternativeName>
        <fullName>Gp39</fullName>
    </alternativeName>
</protein>
<name>VG39_BPML5</name>
<organism>
    <name type="scientific">Mycobacterium phage L5</name>
    <name type="common">Mycobacteriophage L5</name>
    <dbReference type="NCBI Taxonomy" id="31757"/>
    <lineage>
        <taxon>Viruses</taxon>
        <taxon>Duplodnaviria</taxon>
        <taxon>Heunggongvirae</taxon>
        <taxon>Uroviricota</taxon>
        <taxon>Caudoviricetes</taxon>
        <taxon>Fromanvirus</taxon>
    </lineage>
</organism>
<reference key="1">
    <citation type="journal article" date="1993" name="Mol. Microbiol.">
        <title>DNA sequence, structure and gene expression of mycobacteriophage L5: a phage system for mycobacterial genetics.</title>
        <authorList>
            <person name="Hatfull G.F."/>
            <person name="Sarkis G.J."/>
        </authorList>
    </citation>
    <scope>NUCLEOTIDE SEQUENCE [LARGE SCALE GENOMIC DNA]</scope>
</reference>
<proteinExistence type="predicted"/>
<dbReference type="EMBL" id="Z18946">
    <property type="protein sequence ID" value="CAA79415.1"/>
    <property type="molecule type" value="Genomic_DNA"/>
</dbReference>
<dbReference type="PIR" id="S30984">
    <property type="entry name" value="S30984"/>
</dbReference>
<dbReference type="RefSeq" id="NP_039703.1">
    <property type="nucleotide sequence ID" value="NC_001335.1"/>
</dbReference>
<dbReference type="SMR" id="Q05249"/>
<dbReference type="GeneID" id="2942982"/>
<dbReference type="KEGG" id="vg:2942982"/>
<dbReference type="OrthoDB" id="14787at10239"/>
<dbReference type="Proteomes" id="UP000002123">
    <property type="component" value="Genome"/>
</dbReference>
<keyword id="KW-1185">Reference proteome</keyword>
<accession>Q05249</accession>
<feature type="chain" id="PRO_0000164763" description="Gene 39 protein">
    <location>
        <begin position="1"/>
        <end position="139"/>
    </location>
</feature>